<name>ENGB_BACC0</name>
<feature type="chain" id="PRO_1000119589" description="Probable GTP-binding protein EngB">
    <location>
        <begin position="1"/>
        <end position="198"/>
    </location>
</feature>
<feature type="domain" description="EngB-type G" evidence="1">
    <location>
        <begin position="22"/>
        <end position="195"/>
    </location>
</feature>
<feature type="binding site" evidence="1">
    <location>
        <begin position="30"/>
        <end position="37"/>
    </location>
    <ligand>
        <name>GTP</name>
        <dbReference type="ChEBI" id="CHEBI:37565"/>
    </ligand>
</feature>
<feature type="binding site" evidence="1">
    <location>
        <position position="37"/>
    </location>
    <ligand>
        <name>Mg(2+)</name>
        <dbReference type="ChEBI" id="CHEBI:18420"/>
    </ligand>
</feature>
<feature type="binding site" evidence="1">
    <location>
        <begin position="57"/>
        <end position="61"/>
    </location>
    <ligand>
        <name>GTP</name>
        <dbReference type="ChEBI" id="CHEBI:37565"/>
    </ligand>
</feature>
<feature type="binding site" evidence="1">
    <location>
        <position position="59"/>
    </location>
    <ligand>
        <name>Mg(2+)</name>
        <dbReference type="ChEBI" id="CHEBI:18420"/>
    </ligand>
</feature>
<feature type="binding site" evidence="1">
    <location>
        <begin position="75"/>
        <end position="78"/>
    </location>
    <ligand>
        <name>GTP</name>
        <dbReference type="ChEBI" id="CHEBI:37565"/>
    </ligand>
</feature>
<feature type="binding site" evidence="1">
    <location>
        <begin position="142"/>
        <end position="145"/>
    </location>
    <ligand>
        <name>GTP</name>
        <dbReference type="ChEBI" id="CHEBI:37565"/>
    </ligand>
</feature>
<feature type="binding site" evidence="1">
    <location>
        <begin position="174"/>
        <end position="176"/>
    </location>
    <ligand>
        <name>GTP</name>
        <dbReference type="ChEBI" id="CHEBI:37565"/>
    </ligand>
</feature>
<comment type="function">
    <text evidence="1">Necessary for normal cell division and for the maintenance of normal septation.</text>
</comment>
<comment type="cofactor">
    <cofactor evidence="1">
        <name>Mg(2+)</name>
        <dbReference type="ChEBI" id="CHEBI:18420"/>
    </cofactor>
</comment>
<comment type="similarity">
    <text evidence="1">Belongs to the TRAFAC class TrmE-Era-EngA-EngB-Septin-like GTPase superfamily. EngB GTPase family.</text>
</comment>
<gene>
    <name evidence="1" type="primary">engB</name>
    <name type="ordered locus">BCAH820_4556</name>
</gene>
<accession>B7JQ62</accession>
<dbReference type="EMBL" id="CP001283">
    <property type="protein sequence ID" value="ACK88998.1"/>
    <property type="molecule type" value="Genomic_DNA"/>
</dbReference>
<dbReference type="SMR" id="B7JQ62"/>
<dbReference type="KEGG" id="bcu:BCAH820_4556"/>
<dbReference type="HOGENOM" id="CLU_033732_3_0_9"/>
<dbReference type="Proteomes" id="UP000001363">
    <property type="component" value="Chromosome"/>
</dbReference>
<dbReference type="GO" id="GO:0005829">
    <property type="term" value="C:cytosol"/>
    <property type="evidence" value="ECO:0007669"/>
    <property type="project" value="TreeGrafter"/>
</dbReference>
<dbReference type="GO" id="GO:0005525">
    <property type="term" value="F:GTP binding"/>
    <property type="evidence" value="ECO:0007669"/>
    <property type="project" value="UniProtKB-UniRule"/>
</dbReference>
<dbReference type="GO" id="GO:0046872">
    <property type="term" value="F:metal ion binding"/>
    <property type="evidence" value="ECO:0007669"/>
    <property type="project" value="UniProtKB-KW"/>
</dbReference>
<dbReference type="GO" id="GO:0000917">
    <property type="term" value="P:division septum assembly"/>
    <property type="evidence" value="ECO:0007669"/>
    <property type="project" value="UniProtKB-KW"/>
</dbReference>
<dbReference type="CDD" id="cd01876">
    <property type="entry name" value="YihA_EngB"/>
    <property type="match status" value="1"/>
</dbReference>
<dbReference type="FunFam" id="3.40.50.300:FF:000098">
    <property type="entry name" value="Probable GTP-binding protein EngB"/>
    <property type="match status" value="1"/>
</dbReference>
<dbReference type="Gene3D" id="3.40.50.300">
    <property type="entry name" value="P-loop containing nucleotide triphosphate hydrolases"/>
    <property type="match status" value="1"/>
</dbReference>
<dbReference type="HAMAP" id="MF_00321">
    <property type="entry name" value="GTPase_EngB"/>
    <property type="match status" value="1"/>
</dbReference>
<dbReference type="InterPro" id="IPR030393">
    <property type="entry name" value="G_ENGB_dom"/>
</dbReference>
<dbReference type="InterPro" id="IPR006073">
    <property type="entry name" value="GTP-bd"/>
</dbReference>
<dbReference type="InterPro" id="IPR019987">
    <property type="entry name" value="GTP-bd_ribosome_bio_YsxC"/>
</dbReference>
<dbReference type="InterPro" id="IPR027417">
    <property type="entry name" value="P-loop_NTPase"/>
</dbReference>
<dbReference type="InterPro" id="IPR005225">
    <property type="entry name" value="Small_GTP-bd"/>
</dbReference>
<dbReference type="NCBIfam" id="TIGR03598">
    <property type="entry name" value="GTPase_YsxC"/>
    <property type="match status" value="1"/>
</dbReference>
<dbReference type="NCBIfam" id="TIGR00231">
    <property type="entry name" value="small_GTP"/>
    <property type="match status" value="1"/>
</dbReference>
<dbReference type="PANTHER" id="PTHR11649:SF13">
    <property type="entry name" value="ENGB-TYPE G DOMAIN-CONTAINING PROTEIN"/>
    <property type="match status" value="1"/>
</dbReference>
<dbReference type="PANTHER" id="PTHR11649">
    <property type="entry name" value="MSS1/TRME-RELATED GTP-BINDING PROTEIN"/>
    <property type="match status" value="1"/>
</dbReference>
<dbReference type="Pfam" id="PF01926">
    <property type="entry name" value="MMR_HSR1"/>
    <property type="match status" value="1"/>
</dbReference>
<dbReference type="SUPFAM" id="SSF52540">
    <property type="entry name" value="P-loop containing nucleoside triphosphate hydrolases"/>
    <property type="match status" value="1"/>
</dbReference>
<dbReference type="PROSITE" id="PS51706">
    <property type="entry name" value="G_ENGB"/>
    <property type="match status" value="1"/>
</dbReference>
<keyword id="KW-0131">Cell cycle</keyword>
<keyword id="KW-0132">Cell division</keyword>
<keyword id="KW-0342">GTP-binding</keyword>
<keyword id="KW-0460">Magnesium</keyword>
<keyword id="KW-0479">Metal-binding</keyword>
<keyword id="KW-0547">Nucleotide-binding</keyword>
<keyword id="KW-0717">Septation</keyword>
<proteinExistence type="inferred from homology"/>
<sequence length="198" mass="22386">MKVTKADIVISAVKPEQYPDGDLPEIALAGRSNVGKSSFINKILNRKKLVRISSKPGKTQTLNFFLINEMMHFVDVPGYGYAKVSKTERAAWGKMIETYFTTREQLDAAVLVVDLRHKPTNDDVMMYDFLKHYDIPTIIIATKADKIPKGKWQKHLKVVKETLDIESGDEVVLFSSETGLGKEEAWKAIHKFTKTKNA</sequence>
<organism>
    <name type="scientific">Bacillus cereus (strain AH820)</name>
    <dbReference type="NCBI Taxonomy" id="405535"/>
    <lineage>
        <taxon>Bacteria</taxon>
        <taxon>Bacillati</taxon>
        <taxon>Bacillota</taxon>
        <taxon>Bacilli</taxon>
        <taxon>Bacillales</taxon>
        <taxon>Bacillaceae</taxon>
        <taxon>Bacillus</taxon>
        <taxon>Bacillus cereus group</taxon>
    </lineage>
</organism>
<protein>
    <recommendedName>
        <fullName evidence="1">Probable GTP-binding protein EngB</fullName>
    </recommendedName>
</protein>
<evidence type="ECO:0000255" key="1">
    <source>
        <dbReference type="HAMAP-Rule" id="MF_00321"/>
    </source>
</evidence>
<reference key="1">
    <citation type="submission" date="2008-10" db="EMBL/GenBank/DDBJ databases">
        <title>Genome sequence of Bacillus cereus AH820.</title>
        <authorList>
            <person name="Dodson R.J."/>
            <person name="Durkin A.S."/>
            <person name="Rosovitz M.J."/>
            <person name="Rasko D.A."/>
            <person name="Hoffmaster A."/>
            <person name="Ravel J."/>
            <person name="Sutton G."/>
        </authorList>
    </citation>
    <scope>NUCLEOTIDE SEQUENCE [LARGE SCALE GENOMIC DNA]</scope>
    <source>
        <strain>AH820</strain>
    </source>
</reference>